<accession>P0C5H8</accession>
<accession>C8VIC4</accession>
<accession>Q5B8E1</accession>
<evidence type="ECO:0000250" key="1"/>
<evidence type="ECO:0000256" key="2">
    <source>
        <dbReference type="SAM" id="MobiDB-lite"/>
    </source>
</evidence>
<evidence type="ECO:0000305" key="3"/>
<reference key="1">
    <citation type="journal article" date="2005" name="Nature">
        <title>Sequencing of Aspergillus nidulans and comparative analysis with A. fumigatus and A. oryzae.</title>
        <authorList>
            <person name="Galagan J.E."/>
            <person name="Calvo S.E."/>
            <person name="Cuomo C."/>
            <person name="Ma L.-J."/>
            <person name="Wortman J.R."/>
            <person name="Batzoglou S."/>
            <person name="Lee S.-I."/>
            <person name="Bastuerkmen M."/>
            <person name="Spevak C.C."/>
            <person name="Clutterbuck J."/>
            <person name="Kapitonov V."/>
            <person name="Jurka J."/>
            <person name="Scazzocchio C."/>
            <person name="Farman M.L."/>
            <person name="Butler J."/>
            <person name="Purcell S."/>
            <person name="Harris S."/>
            <person name="Braus G.H."/>
            <person name="Draht O."/>
            <person name="Busch S."/>
            <person name="D'Enfert C."/>
            <person name="Bouchier C."/>
            <person name="Goldman G.H."/>
            <person name="Bell-Pedersen D."/>
            <person name="Griffiths-Jones S."/>
            <person name="Doonan J.H."/>
            <person name="Yu J."/>
            <person name="Vienken K."/>
            <person name="Pain A."/>
            <person name="Freitag M."/>
            <person name="Selker E.U."/>
            <person name="Archer D.B."/>
            <person name="Penalva M.A."/>
            <person name="Oakley B.R."/>
            <person name="Momany M."/>
            <person name="Tanaka T."/>
            <person name="Kumagai T."/>
            <person name="Asai K."/>
            <person name="Machida M."/>
            <person name="Nierman W.C."/>
            <person name="Denning D.W."/>
            <person name="Caddick M.X."/>
            <person name="Hynes M."/>
            <person name="Paoletti M."/>
            <person name="Fischer R."/>
            <person name="Miller B.L."/>
            <person name="Dyer P.S."/>
            <person name="Sachs M.S."/>
            <person name="Osmani S.A."/>
            <person name="Birren B.W."/>
        </authorList>
    </citation>
    <scope>NUCLEOTIDE SEQUENCE [LARGE SCALE GENOMIC DNA]</scope>
    <source>
        <strain>FGSC A4 / ATCC 38163 / CBS 112.46 / NRRL 194 / M139</strain>
    </source>
</reference>
<reference key="2">
    <citation type="journal article" date="2009" name="Fungal Genet. Biol.">
        <title>The 2008 update of the Aspergillus nidulans genome annotation: a community effort.</title>
        <authorList>
            <person name="Wortman J.R."/>
            <person name="Gilsenan J.M."/>
            <person name="Joardar V."/>
            <person name="Deegan J."/>
            <person name="Clutterbuck J."/>
            <person name="Andersen M.R."/>
            <person name="Archer D."/>
            <person name="Bencina M."/>
            <person name="Braus G."/>
            <person name="Coutinho P."/>
            <person name="von Dohren H."/>
            <person name="Doonan J."/>
            <person name="Driessen A.J."/>
            <person name="Durek P."/>
            <person name="Espeso E."/>
            <person name="Fekete E."/>
            <person name="Flipphi M."/>
            <person name="Estrada C.G."/>
            <person name="Geysens S."/>
            <person name="Goldman G."/>
            <person name="de Groot P.W."/>
            <person name="Hansen K."/>
            <person name="Harris S.D."/>
            <person name="Heinekamp T."/>
            <person name="Helmstaedt K."/>
            <person name="Henrissat B."/>
            <person name="Hofmann G."/>
            <person name="Homan T."/>
            <person name="Horio T."/>
            <person name="Horiuchi H."/>
            <person name="James S."/>
            <person name="Jones M."/>
            <person name="Karaffa L."/>
            <person name="Karanyi Z."/>
            <person name="Kato M."/>
            <person name="Keller N."/>
            <person name="Kelly D.E."/>
            <person name="Kiel J.A."/>
            <person name="Kim J.M."/>
            <person name="van der Klei I.J."/>
            <person name="Klis F.M."/>
            <person name="Kovalchuk A."/>
            <person name="Krasevec N."/>
            <person name="Kubicek C.P."/>
            <person name="Liu B."/>
            <person name="Maccabe A."/>
            <person name="Meyer V."/>
            <person name="Mirabito P."/>
            <person name="Miskei M."/>
            <person name="Mos M."/>
            <person name="Mullins J."/>
            <person name="Nelson D.R."/>
            <person name="Nielsen J."/>
            <person name="Oakley B.R."/>
            <person name="Osmani S.A."/>
            <person name="Pakula T."/>
            <person name="Paszewski A."/>
            <person name="Paulsen I."/>
            <person name="Pilsyk S."/>
            <person name="Pocsi I."/>
            <person name="Punt P.J."/>
            <person name="Ram A.F."/>
            <person name="Ren Q."/>
            <person name="Robellet X."/>
            <person name="Robson G."/>
            <person name="Seiboth B."/>
            <person name="van Solingen P."/>
            <person name="Specht T."/>
            <person name="Sun J."/>
            <person name="Taheri-Talesh N."/>
            <person name="Takeshita N."/>
            <person name="Ussery D."/>
            <person name="vanKuyk P.A."/>
            <person name="Visser H."/>
            <person name="van de Vondervoort P.J."/>
            <person name="de Vries R.P."/>
            <person name="Walton J."/>
            <person name="Xiang X."/>
            <person name="Xiong Y."/>
            <person name="Zeng A.P."/>
            <person name="Brandt B.W."/>
            <person name="Cornell M.J."/>
            <person name="van den Hondel C.A."/>
            <person name="Visser J."/>
            <person name="Oliver S.G."/>
            <person name="Turner G."/>
        </authorList>
    </citation>
    <scope>GENOME REANNOTATION</scope>
    <source>
        <strain>FGSC A4 / ATCC 38163 / CBS 112.46 / NRRL 194 / M139</strain>
    </source>
</reference>
<dbReference type="EMBL" id="AACD01000052">
    <property type="protein sequence ID" value="EAA62953.1"/>
    <property type="status" value="ALT_SEQ"/>
    <property type="molecule type" value="Genomic_DNA"/>
</dbReference>
<dbReference type="EMBL" id="BN001306">
    <property type="protein sequence ID" value="CBF83230.1"/>
    <property type="molecule type" value="Genomic_DNA"/>
</dbReference>
<dbReference type="RefSeq" id="XP_660793.1">
    <property type="nucleotide sequence ID" value="XM_655701.1"/>
</dbReference>
<dbReference type="SMR" id="P0C5H8"/>
<dbReference type="EnsemblFungi" id="CBF83230">
    <property type="protein sequence ID" value="CBF83230"/>
    <property type="gene ID" value="ANIA_10378"/>
</dbReference>
<dbReference type="KEGG" id="ani:ANIA_10380"/>
<dbReference type="VEuPathDB" id="FungiDB:AN10378"/>
<dbReference type="eggNOG" id="ENOG502SC5V">
    <property type="taxonomic scope" value="Eukaryota"/>
</dbReference>
<dbReference type="HOGENOM" id="CLU_000907_4_6_1"/>
<dbReference type="InParanoid" id="P0C5H8"/>
<dbReference type="OMA" id="PHMQPNT"/>
<dbReference type="OrthoDB" id="2593073at2759"/>
<dbReference type="Proteomes" id="UP000000560">
    <property type="component" value="Chromosome VI"/>
</dbReference>
<dbReference type="GO" id="GO:0090575">
    <property type="term" value="C:RNA polymerase II transcription regulator complex"/>
    <property type="evidence" value="ECO:0000318"/>
    <property type="project" value="GO_Central"/>
</dbReference>
<dbReference type="GO" id="GO:0001228">
    <property type="term" value="F:DNA-binding transcription activator activity, RNA polymerase II-specific"/>
    <property type="evidence" value="ECO:0000318"/>
    <property type="project" value="GO_Central"/>
</dbReference>
<dbReference type="GO" id="GO:0000976">
    <property type="term" value="F:transcription cis-regulatory region binding"/>
    <property type="evidence" value="ECO:0000318"/>
    <property type="project" value="GO_Central"/>
</dbReference>
<dbReference type="Gene3D" id="1.20.5.170">
    <property type="match status" value="1"/>
</dbReference>
<dbReference type="InterPro" id="IPR050936">
    <property type="entry name" value="AP-1-like"/>
</dbReference>
<dbReference type="InterPro" id="IPR004827">
    <property type="entry name" value="bZIP"/>
</dbReference>
<dbReference type="InterPro" id="IPR046347">
    <property type="entry name" value="bZIP_sf"/>
</dbReference>
<dbReference type="PANTHER" id="PTHR40621">
    <property type="entry name" value="TRANSCRIPTION FACTOR KAPC-RELATED"/>
    <property type="match status" value="1"/>
</dbReference>
<dbReference type="PANTHER" id="PTHR40621:SF11">
    <property type="entry name" value="TRANSCRIPTION FACTOR KAPC-RELATED"/>
    <property type="match status" value="1"/>
</dbReference>
<dbReference type="Pfam" id="PF00170">
    <property type="entry name" value="bZIP_1"/>
    <property type="match status" value="1"/>
</dbReference>
<dbReference type="SMART" id="SM00338">
    <property type="entry name" value="BRLZ"/>
    <property type="match status" value="1"/>
</dbReference>
<dbReference type="SUPFAM" id="SSF57959">
    <property type="entry name" value="Leucine zipper domain"/>
    <property type="match status" value="1"/>
</dbReference>
<dbReference type="PROSITE" id="PS00036">
    <property type="entry name" value="BZIP_BASIC"/>
    <property type="match status" value="1"/>
</dbReference>
<organism>
    <name type="scientific">Emericella nidulans (strain FGSC A4 / ATCC 38163 / CBS 112.46 / NRRL 194 / M139)</name>
    <name type="common">Aspergillus nidulans</name>
    <dbReference type="NCBI Taxonomy" id="227321"/>
    <lineage>
        <taxon>Eukaryota</taxon>
        <taxon>Fungi</taxon>
        <taxon>Dikarya</taxon>
        <taxon>Ascomycota</taxon>
        <taxon>Pezizomycotina</taxon>
        <taxon>Eurotiomycetes</taxon>
        <taxon>Eurotiomycetidae</taxon>
        <taxon>Eurotiales</taxon>
        <taxon>Aspergillaceae</taxon>
        <taxon>Aspergillus</taxon>
        <taxon>Aspergillus subgen. Nidulantes</taxon>
    </lineage>
</organism>
<name>KAPC_EMENI</name>
<feature type="chain" id="PRO_0000306819" description="Putative transcription factor kapC">
    <location>
        <begin position="1"/>
        <end position="278"/>
    </location>
</feature>
<feature type="domain" description="bZIP">
    <location>
        <begin position="103"/>
        <end position="166"/>
    </location>
</feature>
<feature type="region of interest" description="Disordered" evidence="2">
    <location>
        <begin position="1"/>
        <end position="121"/>
    </location>
</feature>
<feature type="region of interest" description="Basic motif" evidence="1">
    <location>
        <begin position="104"/>
        <end position="127"/>
    </location>
</feature>
<feature type="region of interest" description="Leucine-zipper" evidence="1">
    <location>
        <begin position="131"/>
        <end position="162"/>
    </location>
</feature>
<feature type="region of interest" description="Disordered" evidence="2">
    <location>
        <begin position="173"/>
        <end position="278"/>
    </location>
</feature>
<feature type="compositionally biased region" description="Pro residues" evidence="2">
    <location>
        <begin position="1"/>
        <end position="10"/>
    </location>
</feature>
<feature type="compositionally biased region" description="Polar residues" evidence="2">
    <location>
        <begin position="56"/>
        <end position="68"/>
    </location>
</feature>
<feature type="compositionally biased region" description="Low complexity" evidence="2">
    <location>
        <begin position="109"/>
        <end position="119"/>
    </location>
</feature>
<feature type="compositionally biased region" description="Low complexity" evidence="2">
    <location>
        <begin position="198"/>
        <end position="214"/>
    </location>
</feature>
<feature type="compositionally biased region" description="Polar residues" evidence="2">
    <location>
        <begin position="215"/>
        <end position="226"/>
    </location>
</feature>
<feature type="compositionally biased region" description="Basic and acidic residues" evidence="2">
    <location>
        <begin position="254"/>
        <end position="269"/>
    </location>
</feature>
<sequence length="278" mass="30582">MQPALAPAPHPSMQTSAQDHADQVLHDSLLAAQHLSQHPQQPRPQQPNAQPHHLQPTATTSPRDQNNIDPAISGGAMLPPSQPPAQPEPTVEDETPKTYGKRPLSTSKRAAQNRAAQRAFRQRKESYIRKLEEQVKEYEVMSQEYKALQAENYQLREYVINLQSRLLDSQGEVPELPGNIDLNQPRTEISVPQPAPRPGQAGASAPPQGSPQSQVSIANDDMNSLNRIAEAGLGMRKHPNEEAFLSNNFQARRGRGDETADPSETKTEPPTHGLPMVS</sequence>
<protein>
    <recommendedName>
        <fullName>Putative transcription factor kapC</fullName>
    </recommendedName>
</protein>
<proteinExistence type="inferred from homology"/>
<keyword id="KW-0238">DNA-binding</keyword>
<keyword id="KW-0539">Nucleus</keyword>
<keyword id="KW-1185">Reference proteome</keyword>
<keyword id="KW-0804">Transcription</keyword>
<keyword id="KW-0805">Transcription regulation</keyword>
<comment type="function">
    <text evidence="1">Putative transcription factor.</text>
</comment>
<comment type="subcellular location">
    <subcellularLocation>
        <location evidence="1">Nucleus</location>
    </subcellularLocation>
</comment>
<comment type="similarity">
    <text evidence="3">Belongs to the bZIP family.</text>
</comment>
<comment type="sequence caution" evidence="3">
    <conflict type="erroneous gene model prediction">
        <sequence resource="EMBL-CDS" id="EAA62953"/>
    </conflict>
    <text>The predicted gene AN3189 has been split into 2 genes: AN10378 and AN10380.</text>
</comment>
<gene>
    <name type="primary">kapC</name>
    <name type="ORF">AN10378</name>
</gene>